<name>PCDG7_HUMAN</name>
<feature type="signal peptide" evidence="2">
    <location>
        <begin position="1"/>
        <end position="28"/>
    </location>
</feature>
<feature type="chain" id="PRO_0000003960" description="Protocadherin gamma-A7">
    <location>
        <begin position="29"/>
        <end position="932"/>
    </location>
</feature>
<feature type="topological domain" description="Extracellular" evidence="2">
    <location>
        <begin position="29"/>
        <end position="692"/>
    </location>
</feature>
<feature type="transmembrane region" description="Helical" evidence="2">
    <location>
        <begin position="693"/>
        <end position="713"/>
    </location>
</feature>
<feature type="topological domain" description="Cytoplasmic" evidence="2">
    <location>
        <begin position="714"/>
        <end position="932"/>
    </location>
</feature>
<feature type="domain" description="Cadherin 1" evidence="3">
    <location>
        <begin position="29"/>
        <end position="133"/>
    </location>
</feature>
<feature type="domain" description="Cadherin 2" evidence="3">
    <location>
        <begin position="134"/>
        <end position="242"/>
    </location>
</feature>
<feature type="domain" description="Cadherin 3" evidence="3">
    <location>
        <begin position="243"/>
        <end position="347"/>
    </location>
</feature>
<feature type="domain" description="Cadherin 4" evidence="3">
    <location>
        <begin position="348"/>
        <end position="452"/>
    </location>
</feature>
<feature type="domain" description="Cadherin 5" evidence="3">
    <location>
        <begin position="453"/>
        <end position="562"/>
    </location>
</feature>
<feature type="domain" description="Cadherin 6" evidence="3">
    <location>
        <begin position="570"/>
        <end position="682"/>
    </location>
</feature>
<feature type="region of interest" description="Disordered" evidence="4">
    <location>
        <begin position="805"/>
        <end position="841"/>
    </location>
</feature>
<feature type="region of interest" description="Disordered" evidence="4">
    <location>
        <begin position="902"/>
        <end position="932"/>
    </location>
</feature>
<feature type="compositionally biased region" description="Basic residues" evidence="4">
    <location>
        <begin position="922"/>
        <end position="932"/>
    </location>
</feature>
<feature type="glycosylation site" description="N-linked (GlcNAc...) asparagine" evidence="2">
    <location>
        <position position="419"/>
    </location>
</feature>
<feature type="glycosylation site" description="N-linked (GlcNAc...) asparagine" evidence="2">
    <location>
        <position position="545"/>
    </location>
</feature>
<feature type="splice variant" id="VSP_008671" description="In isoform 2." evidence="5 6">
    <original>QAPPNTDWR</original>
    <variation>VSPALPLFP</variation>
    <location>
        <begin position="809"/>
        <end position="817"/>
    </location>
</feature>
<feature type="splice variant" id="VSP_008672" description="In isoform 2." evidence="5 6">
    <location>
        <begin position="818"/>
        <end position="932"/>
    </location>
</feature>
<feature type="sequence variant" id="VAR_048561" description="In dbSNP:rs2072315.">
    <original>E</original>
    <variation>G</variation>
    <location>
        <position position="188"/>
    </location>
</feature>
<feature type="sequence variant" id="VAR_048562" description="In dbSNP:rs2240698.">
    <original>L</original>
    <variation>F</variation>
    <location>
        <position position="212"/>
    </location>
</feature>
<feature type="sequence variant" id="VAR_048563" description="In dbSNP:rs17097251.">
    <original>T</original>
    <variation>M</variation>
    <location>
        <position position="239"/>
    </location>
</feature>
<gene>
    <name type="primary">PCDHGA7</name>
</gene>
<evidence type="ECO:0000250" key="1"/>
<evidence type="ECO:0000255" key="2"/>
<evidence type="ECO:0000255" key="3">
    <source>
        <dbReference type="PROSITE-ProRule" id="PRU00043"/>
    </source>
</evidence>
<evidence type="ECO:0000256" key="4">
    <source>
        <dbReference type="SAM" id="MobiDB-lite"/>
    </source>
</evidence>
<evidence type="ECO:0000303" key="5">
    <source>
    </source>
</evidence>
<evidence type="ECO:0000303" key="6">
    <source>
    </source>
</evidence>
<keyword id="KW-0025">Alternative splicing</keyword>
<keyword id="KW-0106">Calcium</keyword>
<keyword id="KW-0130">Cell adhesion</keyword>
<keyword id="KW-1003">Cell membrane</keyword>
<keyword id="KW-0325">Glycoprotein</keyword>
<keyword id="KW-0472">Membrane</keyword>
<keyword id="KW-1267">Proteomics identification</keyword>
<keyword id="KW-1185">Reference proteome</keyword>
<keyword id="KW-0677">Repeat</keyword>
<keyword id="KW-0732">Signal</keyword>
<keyword id="KW-0812">Transmembrane</keyword>
<keyword id="KW-1133">Transmembrane helix</keyword>
<comment type="function">
    <text>Potential calcium-dependent cell-adhesion protein. May be involved in the establishment and maintenance of specific neuronal connections in the brain.</text>
</comment>
<comment type="subcellular location">
    <subcellularLocation>
        <location evidence="1">Cell membrane</location>
        <topology evidence="1">Single-pass type I membrane protein</topology>
    </subcellularLocation>
</comment>
<comment type="alternative products">
    <event type="alternative splicing"/>
    <isoform>
        <id>Q9Y5G6-1</id>
        <name>1</name>
        <sequence type="displayed"/>
    </isoform>
    <isoform>
        <id>Q9Y5G6-2</id>
        <name>2</name>
        <name>Short</name>
        <sequence type="described" ref="VSP_008671 VSP_008672"/>
    </isoform>
</comment>
<organism>
    <name type="scientific">Homo sapiens</name>
    <name type="common">Human</name>
    <dbReference type="NCBI Taxonomy" id="9606"/>
    <lineage>
        <taxon>Eukaryota</taxon>
        <taxon>Metazoa</taxon>
        <taxon>Chordata</taxon>
        <taxon>Craniata</taxon>
        <taxon>Vertebrata</taxon>
        <taxon>Euteleostomi</taxon>
        <taxon>Mammalia</taxon>
        <taxon>Eutheria</taxon>
        <taxon>Euarchontoglires</taxon>
        <taxon>Primates</taxon>
        <taxon>Haplorrhini</taxon>
        <taxon>Catarrhini</taxon>
        <taxon>Hominidae</taxon>
        <taxon>Homo</taxon>
    </lineage>
</organism>
<accession>Q9Y5G6</accession>
<accession>B2RN87</accession>
<accession>Q9Y5D0</accession>
<dbReference type="EMBL" id="AF152327">
    <property type="protein sequence ID" value="AAD43721.1"/>
    <property type="molecule type" value="mRNA"/>
</dbReference>
<dbReference type="EMBL" id="AF152514">
    <property type="protein sequence ID" value="AAD43774.1"/>
    <property type="molecule type" value="mRNA"/>
</dbReference>
<dbReference type="EMBL" id="CH471062">
    <property type="protein sequence ID" value="EAW61943.1"/>
    <property type="molecule type" value="Genomic_DNA"/>
</dbReference>
<dbReference type="EMBL" id="BC136747">
    <property type="protein sequence ID" value="AAI36748.1"/>
    <property type="molecule type" value="mRNA"/>
</dbReference>
<dbReference type="EMBL" id="BC136748">
    <property type="protein sequence ID" value="AAI36749.1"/>
    <property type="molecule type" value="mRNA"/>
</dbReference>
<dbReference type="CCDS" id="CCDS54927.1">
    <molecule id="Q9Y5G6-1"/>
</dbReference>
<dbReference type="CCDS" id="CCDS75336.1">
    <molecule id="Q9Y5G6-2"/>
</dbReference>
<dbReference type="RefSeq" id="NP_061743.1">
    <molecule id="Q9Y5G6-1"/>
    <property type="nucleotide sequence ID" value="NM_018920.4"/>
</dbReference>
<dbReference type="RefSeq" id="NP_114476.1">
    <molecule id="Q9Y5G6-2"/>
    <property type="nucleotide sequence ID" value="NM_032087.3"/>
</dbReference>
<dbReference type="SMR" id="Q9Y5G6"/>
<dbReference type="BioGRID" id="121048">
    <property type="interactions" value="24"/>
</dbReference>
<dbReference type="FunCoup" id="Q9Y5G6">
    <property type="interactions" value="118"/>
</dbReference>
<dbReference type="IntAct" id="Q9Y5G6">
    <property type="interactions" value="24"/>
</dbReference>
<dbReference type="MINT" id="Q9Y5G6"/>
<dbReference type="STRING" id="9606.ENSP00000430024"/>
<dbReference type="GlyCosmos" id="Q9Y5G6">
    <property type="glycosylation" value="2 sites, No reported glycans"/>
</dbReference>
<dbReference type="GlyGen" id="Q9Y5G6">
    <property type="glycosylation" value="3 sites, 1 N-linked glycan (1 site)"/>
</dbReference>
<dbReference type="iPTMnet" id="Q9Y5G6"/>
<dbReference type="PhosphoSitePlus" id="Q9Y5G6"/>
<dbReference type="BioMuta" id="PCDHGA7"/>
<dbReference type="DMDM" id="37999836"/>
<dbReference type="jPOST" id="Q9Y5G6"/>
<dbReference type="MassIVE" id="Q9Y5G6"/>
<dbReference type="PaxDb" id="9606-ENSP00000430024"/>
<dbReference type="PeptideAtlas" id="Q9Y5G6"/>
<dbReference type="ProteomicsDB" id="86373">
    <molecule id="Q9Y5G6-1"/>
</dbReference>
<dbReference type="ProteomicsDB" id="86374">
    <molecule id="Q9Y5G6-2"/>
</dbReference>
<dbReference type="Antibodypedia" id="57473">
    <property type="antibodies" value="15 antibodies from 3 providers"/>
</dbReference>
<dbReference type="DNASU" id="56108"/>
<dbReference type="Ensembl" id="ENST00000518325.2">
    <molecule id="Q9Y5G6-1"/>
    <property type="protein sequence ID" value="ENSP00000430024.1"/>
    <property type="gene ID" value="ENSG00000253537.3"/>
</dbReference>
<dbReference type="Ensembl" id="ENST00000617050.1">
    <molecule id="Q9Y5G6-2"/>
    <property type="protein sequence ID" value="ENSP00000477805.1"/>
    <property type="gene ID" value="ENSG00000253537.3"/>
</dbReference>
<dbReference type="GeneID" id="56108"/>
<dbReference type="KEGG" id="hsa:56108"/>
<dbReference type="MANE-Select" id="ENST00000518325.2">
    <property type="protein sequence ID" value="ENSP00000430024.1"/>
    <property type="RefSeq nucleotide sequence ID" value="NM_018920.4"/>
    <property type="RefSeq protein sequence ID" value="NP_061743.1"/>
</dbReference>
<dbReference type="UCSC" id="uc003ljz.3">
    <molecule id="Q9Y5G6-1"/>
    <property type="organism name" value="human"/>
</dbReference>
<dbReference type="AGR" id="HGNC:8705"/>
<dbReference type="CTD" id="56108"/>
<dbReference type="DisGeNET" id="56108"/>
<dbReference type="GeneCards" id="PCDHGA7"/>
<dbReference type="HGNC" id="HGNC:8705">
    <property type="gene designation" value="PCDHGA7"/>
</dbReference>
<dbReference type="HPA" id="ENSG00000253537">
    <property type="expression patterns" value="Tissue enhanced (brain)"/>
</dbReference>
<dbReference type="MalaCards" id="PCDHGA7"/>
<dbReference type="MIM" id="604968">
    <property type="type" value="gene"/>
</dbReference>
<dbReference type="MIM" id="606294">
    <property type="type" value="gene"/>
</dbReference>
<dbReference type="neXtProt" id="NX_Q9Y5G6"/>
<dbReference type="OpenTargets" id="ENSG00000253537"/>
<dbReference type="PharmGKB" id="PA33053"/>
<dbReference type="VEuPathDB" id="HostDB:ENSG00000253537"/>
<dbReference type="eggNOG" id="KOG3594">
    <property type="taxonomic scope" value="Eukaryota"/>
</dbReference>
<dbReference type="GeneTree" id="ENSGT00940000164742"/>
<dbReference type="HOGENOM" id="CLU_006480_3_0_1"/>
<dbReference type="InParanoid" id="Q9Y5G6"/>
<dbReference type="OMA" id="LLGTWWE"/>
<dbReference type="OrthoDB" id="6252479at2759"/>
<dbReference type="PAN-GO" id="Q9Y5G6">
    <property type="GO annotations" value="2 GO annotations based on evolutionary models"/>
</dbReference>
<dbReference type="PhylomeDB" id="Q9Y5G6"/>
<dbReference type="TreeFam" id="TF332299"/>
<dbReference type="PathwayCommons" id="Q9Y5G6"/>
<dbReference type="SignaLink" id="Q9Y5G6"/>
<dbReference type="SIGNOR" id="Q9Y5G6"/>
<dbReference type="BioGRID-ORCS" id="56108">
    <property type="hits" value="16 hits in 1093 CRISPR screens"/>
</dbReference>
<dbReference type="GenomeRNAi" id="56108"/>
<dbReference type="Pharos" id="Q9Y5G6">
    <property type="development level" value="Tdark"/>
</dbReference>
<dbReference type="PRO" id="PR:Q9Y5G6"/>
<dbReference type="Proteomes" id="UP000005640">
    <property type="component" value="Chromosome 5"/>
</dbReference>
<dbReference type="RNAct" id="Q9Y5G6">
    <property type="molecule type" value="protein"/>
</dbReference>
<dbReference type="Bgee" id="ENSG00000253537">
    <property type="expression patterns" value="Expressed in stromal cell of endometrium and 104 other cell types or tissues"/>
</dbReference>
<dbReference type="GO" id="GO:0005886">
    <property type="term" value="C:plasma membrane"/>
    <property type="evidence" value="ECO:0000318"/>
    <property type="project" value="GO_Central"/>
</dbReference>
<dbReference type="GO" id="GO:0005509">
    <property type="term" value="F:calcium ion binding"/>
    <property type="evidence" value="ECO:0007669"/>
    <property type="project" value="InterPro"/>
</dbReference>
<dbReference type="GO" id="GO:0007155">
    <property type="term" value="P:cell adhesion"/>
    <property type="evidence" value="ECO:0000318"/>
    <property type="project" value="GO_Central"/>
</dbReference>
<dbReference type="GO" id="GO:0007156">
    <property type="term" value="P:homophilic cell adhesion via plasma membrane adhesion molecules"/>
    <property type="evidence" value="ECO:0007669"/>
    <property type="project" value="InterPro"/>
</dbReference>
<dbReference type="GO" id="GO:0007399">
    <property type="term" value="P:nervous system development"/>
    <property type="evidence" value="ECO:0007669"/>
    <property type="project" value="UniProtKB-ARBA"/>
</dbReference>
<dbReference type="CDD" id="cd11304">
    <property type="entry name" value="Cadherin_repeat"/>
    <property type="match status" value="6"/>
</dbReference>
<dbReference type="FunFam" id="2.60.40.60:FF:000004">
    <property type="entry name" value="Protocadherin 1 gamma 2"/>
    <property type="match status" value="1"/>
</dbReference>
<dbReference type="FunFam" id="2.60.40.60:FF:000001">
    <property type="entry name" value="Protocadherin alpha 2"/>
    <property type="match status" value="1"/>
</dbReference>
<dbReference type="FunFam" id="2.60.40.60:FF:000002">
    <property type="entry name" value="Protocadherin alpha 2"/>
    <property type="match status" value="1"/>
</dbReference>
<dbReference type="FunFam" id="2.60.40.60:FF:000006">
    <property type="entry name" value="Protocadherin alpha 2"/>
    <property type="match status" value="1"/>
</dbReference>
<dbReference type="FunFam" id="2.60.40.60:FF:000129">
    <property type="entry name" value="protocadherin alpha-C2 isoform X1"/>
    <property type="match status" value="1"/>
</dbReference>
<dbReference type="FunFam" id="2.60.40.60:FF:000018">
    <property type="entry name" value="Protocadherin gamma c3"/>
    <property type="match status" value="1"/>
</dbReference>
<dbReference type="Gene3D" id="2.60.40.60">
    <property type="entry name" value="Cadherins"/>
    <property type="match status" value="6"/>
</dbReference>
<dbReference type="InterPro" id="IPR002126">
    <property type="entry name" value="Cadherin-like_dom"/>
</dbReference>
<dbReference type="InterPro" id="IPR015919">
    <property type="entry name" value="Cadherin-like_sf"/>
</dbReference>
<dbReference type="InterPro" id="IPR032455">
    <property type="entry name" value="Cadherin_C"/>
</dbReference>
<dbReference type="InterPro" id="IPR031904">
    <property type="entry name" value="Cadherin_CBD"/>
</dbReference>
<dbReference type="InterPro" id="IPR020894">
    <property type="entry name" value="Cadherin_CS"/>
</dbReference>
<dbReference type="InterPro" id="IPR013164">
    <property type="entry name" value="Cadherin_N"/>
</dbReference>
<dbReference type="InterPro" id="IPR050174">
    <property type="entry name" value="Protocadherin/Cadherin-CA"/>
</dbReference>
<dbReference type="PANTHER" id="PTHR24028">
    <property type="entry name" value="CADHERIN-87A"/>
    <property type="match status" value="1"/>
</dbReference>
<dbReference type="PANTHER" id="PTHR24028:SF56">
    <property type="entry name" value="PROTOCADHERIN GAMMA-A7"/>
    <property type="match status" value="1"/>
</dbReference>
<dbReference type="Pfam" id="PF00028">
    <property type="entry name" value="Cadherin"/>
    <property type="match status" value="5"/>
</dbReference>
<dbReference type="Pfam" id="PF08266">
    <property type="entry name" value="Cadherin_2"/>
    <property type="match status" value="1"/>
</dbReference>
<dbReference type="Pfam" id="PF16492">
    <property type="entry name" value="Cadherin_C_2"/>
    <property type="match status" value="1"/>
</dbReference>
<dbReference type="Pfam" id="PF15974">
    <property type="entry name" value="Cadherin_tail"/>
    <property type="match status" value="1"/>
</dbReference>
<dbReference type="PRINTS" id="PR00205">
    <property type="entry name" value="CADHERIN"/>
</dbReference>
<dbReference type="SMART" id="SM00112">
    <property type="entry name" value="CA"/>
    <property type="match status" value="6"/>
</dbReference>
<dbReference type="SUPFAM" id="SSF49313">
    <property type="entry name" value="Cadherin-like"/>
    <property type="match status" value="6"/>
</dbReference>
<dbReference type="PROSITE" id="PS00232">
    <property type="entry name" value="CADHERIN_1"/>
    <property type="match status" value="4"/>
</dbReference>
<dbReference type="PROSITE" id="PS50268">
    <property type="entry name" value="CADHERIN_2"/>
    <property type="match status" value="6"/>
</dbReference>
<proteinExistence type="evidence at protein level"/>
<protein>
    <recommendedName>
        <fullName>Protocadherin gamma-A7</fullName>
        <shortName>PCDH-gamma-A7</shortName>
    </recommendedName>
</protein>
<reference key="1">
    <citation type="journal article" date="1999" name="Cell">
        <title>A striking organization of a large family of human neural cadherin-like cell adhesion genes.</title>
        <authorList>
            <person name="Wu Q."/>
            <person name="Maniatis T."/>
        </authorList>
    </citation>
    <scope>NUCLEOTIDE SEQUENCE [MRNA] (ISOFORMS 1 AND 2)</scope>
    <source>
        <tissue>Brain</tissue>
    </source>
</reference>
<reference key="2">
    <citation type="submission" date="2005-09" db="EMBL/GenBank/DDBJ databases">
        <authorList>
            <person name="Mural R.J."/>
            <person name="Istrail S."/>
            <person name="Sutton G.G."/>
            <person name="Florea L."/>
            <person name="Halpern A.L."/>
            <person name="Mobarry C.M."/>
            <person name="Lippert R."/>
            <person name="Walenz B."/>
            <person name="Shatkay H."/>
            <person name="Dew I."/>
            <person name="Miller J.R."/>
            <person name="Flanigan M.J."/>
            <person name="Edwards N.J."/>
            <person name="Bolanos R."/>
            <person name="Fasulo D."/>
            <person name="Halldorsson B.V."/>
            <person name="Hannenhalli S."/>
            <person name="Turner R."/>
            <person name="Yooseph S."/>
            <person name="Lu F."/>
            <person name="Nusskern D.R."/>
            <person name="Shue B.C."/>
            <person name="Zheng X.H."/>
            <person name="Zhong F."/>
            <person name="Delcher A.L."/>
            <person name="Huson D.H."/>
            <person name="Kravitz S.A."/>
            <person name="Mouchard L."/>
            <person name="Reinert K."/>
            <person name="Remington K.A."/>
            <person name="Clark A.G."/>
            <person name="Waterman M.S."/>
            <person name="Eichler E.E."/>
            <person name="Adams M.D."/>
            <person name="Hunkapiller M.W."/>
            <person name="Myers E.W."/>
            <person name="Venter J.C."/>
        </authorList>
    </citation>
    <scope>NUCLEOTIDE SEQUENCE [LARGE SCALE GENOMIC DNA]</scope>
</reference>
<reference key="3">
    <citation type="journal article" date="2004" name="Genome Res.">
        <title>The status, quality, and expansion of the NIH full-length cDNA project: the Mammalian Gene Collection (MGC).</title>
        <authorList>
            <consortium name="The MGC Project Team"/>
        </authorList>
    </citation>
    <scope>NUCLEOTIDE SEQUENCE [LARGE SCALE MRNA] (ISOFORM 2)</scope>
    <source>
        <tissue>Brain</tissue>
    </source>
</reference>
<sequence length="932" mass="101722">MAAQPRGGDYRGFFLLSILLGTPWEAWAGRILYSVSEETDKGSFVGDIAKDLGLEPRELAERGVRIISRGRTQLFALNQRSGSLVTAGRIDREEICAQSARCLVNFNILMEDKMNLYPIDVEIIDINDNVPRFLTEEINVKIMENTAPGVRFPLSEAGDPDVGTNSLQSYQLSPNRHFSLAVQSGDDETKYPELVLERVLDREEERVHHLVLTASDGGDPPRSSTAHIQVTVVDVNDHTPVFSLPQYQVTVPENVPVGTRLLTVHAIDLDEGVNGEVTYSFRKITPKLPKMFHLNSLTGEISTLEGLDYEETAFYEMEVQAQDGPGSLTKAKVLITVLDVNDNAPEVTMTSLSSSIPEDTPLGTVIALFYLQDRDSGKNGEVTCTIPENLPFKLEKSIDNYYRLVTTKNLDRETLSLYNITLKATDGGTPPLSRETHIFMQVADTNDNPPTFPHSSYSVYIAENNPRGASIFLVTAQDHDSEDNAQITYSLAEDTIQGAPVSSYVSINSDTGVLYALQSFDYEQLRELQLRVTAHDSGDPPLSSNMSLSLFVLDQNDNPPEILYPALPTDGSTGMELAPRSAEPGYLVTKVVAVDKDSGQNAWLSYLLLKASEPGLFAVGLYTGEVRTARALLDRDALKQSLVVAVQDHGQPPLSATVTLTVAVADSIPEVLADLGSLEPSDGPYNYDLTLYLVVAVATVSCVFLAFVLVLLALRLRRWHKSRLLQASEGGLANVPTSHFVGMDGVQAFLQTYSHEVSLTADSRKSHLIFPQPNYVDMLISQESCEKNDSLLTSVDFQECKENLPSIQQAPPNTDWRFSQAQRPGTSGSQNGDDTGTWPNNQFDTEMLQAMILASASEAADGSSTLGGGAGTMGLSARYGPQFTLQHVPDYRQNVYIPGSNATLTNAAGKRDGKAPAGGNGNKKKSGKKEKK</sequence>